<comment type="function">
    <text evidence="9 11">Plays a role in virulence and host-pathogen interactions. Mediates binding to human platelets via interaction with the human cell surface glycoprotein GP1BA (PubMed:21765814). Plays a positive role in biofilm formation, possibly by self-association via the basic region (BR) (PubMed:20714350).</text>
</comment>
<comment type="subunit">
    <text evidence="10 11">Both SSR domains in the unglycosylated protein bind to Asp2 and Asp3; glycosylated protein binds less well. Interacts with the human cell surface glycoprotein GP1BA.</text>
</comment>
<comment type="interaction">
    <interactant intactId="EBI-6414561">
        <id>Q939N5</id>
    </interactant>
    <interactant intactId="EBI-6414583">
        <id>Q9AET8</id>
        <label>asp2</label>
    </interactant>
    <organismsDiffer>false</organismsDiffer>
    <experiments>4</experiments>
</comment>
<comment type="interaction">
    <interactant intactId="EBI-6414561">
        <id>Q939N5</id>
    </interactant>
    <interactant intactId="EBI-6414568">
        <id>Q9AET7</id>
        <label>asp3</label>
    </interactant>
    <organismsDiffer>false</organismsDiffer>
    <experiments>4</experiments>
</comment>
<comment type="subcellular location">
    <subcellularLocation>
        <location evidence="6 7">Secreted</location>
        <location evidence="6 7">Cell wall</location>
        <topology evidence="6 7">Peptidoglycan-anchor</topology>
    </subcellularLocation>
    <text evidence="6">Exported by the accessory SecA2/SecY2 protein translocation apparatus.</text>
</comment>
<comment type="domain">
    <text evidence="9 13">Has a short and long Ser-rich region with a basic region between them. The SRR domains themselves are comprised of inexact repeats of SASESASTSASV. SSR1 has 6 repeats, SSR2 has 200. The Ser-rich regions are both glycosylated. The basic region (BR) binds to whole cell lysates of wild-type but not bacteria deleted of this gene; it also recognizes whole cell lysates of S.aureus strain ISP479C probably via SraP, but not lysates of S.pneumoniae TIGR4 (PubMed:20714350). The predicted pI of the basic region is 9.51 (PubMed:19202081).</text>
</comment>
<comment type="PTM">
    <text evidence="1">Proteolytically cleaved by a metalloprotease.</text>
</comment>
<comment type="PTM">
    <text evidence="2 7 8 15 16 17">Both SSR1 and SSR2 domains are glycosylated (Probable). A truncated derivative (residues 1-2062) contains 105 nmol per nmol of protein, suggesting at least 10% of the apparent molecular weight is due to carbohydrates (PubMed:14729688). Glucose and N-acetylglucosamine are present in a ratio of 30:73 residues per truncated polypeptide, as well as minor amounts of galactose and N-acetylgalactosamine (PubMed:14729688). Glycosylation occurs intracellularly in the Ser-rich regions SSR1 and SSR2 (PubMed:14729688, PubMed:15489421). Glycosylation of SSR2 domain may be required to prevent aggregation of GspB (Probable). It is probable that most of the Ser residues in SSR1 and SSR2 are O-GlcNAcylated. Sequential glycosylation by sugar transferases are able to generate complex sugar polymorphisms (By similarity).</text>
</comment>
<comment type="disruption phenotype">
    <text evidence="6 9">Loss of adherence to human platelet cells (PubMed:12010500). Decrease in early biofilm formation (PubMed:20714350).</text>
</comment>
<comment type="miscellaneous">
    <text evidence="12">S.gordonii, a commensal oral cavity bacteria, is among the bacteria most frequently identified as being the primary etiological agents of subacute infective endocarditis (found in 13% of cases).</text>
</comment>
<comment type="similarity">
    <text evidence="14">Belongs to the serine-rich repeat protein (SRRP) family.</text>
</comment>
<protein>
    <recommendedName>
        <fullName>Platelet binding protein GspB</fullName>
    </recommendedName>
    <alternativeName>
        <fullName evidence="14">Adhesin GspB</fullName>
    </alternativeName>
    <alternativeName>
        <fullName>Serine-rich adhesin for platelets</fullName>
    </alternativeName>
    <alternativeName>
        <fullName>Serine-rich repeat protein GspB</fullName>
    </alternativeName>
</protein>
<evidence type="ECO:0000250" key="1"/>
<evidence type="ECO:0000250" key="2">
    <source>
        <dbReference type="UniProtKB" id="A0A0H2URK1"/>
    </source>
</evidence>
<evidence type="ECO:0000255" key="3"/>
<evidence type="ECO:0000255" key="4">
    <source>
        <dbReference type="PROSITE-ProRule" id="PRU00477"/>
    </source>
</evidence>
<evidence type="ECO:0000256" key="5">
    <source>
        <dbReference type="SAM" id="MobiDB-lite"/>
    </source>
</evidence>
<evidence type="ECO:0000269" key="6">
    <source>
    </source>
</evidence>
<evidence type="ECO:0000269" key="7">
    <source>
    </source>
</evidence>
<evidence type="ECO:0000269" key="8">
    <source>
    </source>
</evidence>
<evidence type="ECO:0000269" key="9">
    <source>
    </source>
</evidence>
<evidence type="ECO:0000269" key="10">
    <source>
    </source>
</evidence>
<evidence type="ECO:0000269" key="11">
    <source>
    </source>
</evidence>
<evidence type="ECO:0000269" key="12">
    <source>
    </source>
</evidence>
<evidence type="ECO:0000303" key="13">
    <source>
    </source>
</evidence>
<evidence type="ECO:0000305" key="14"/>
<evidence type="ECO:0000305" key="15">
    <source>
    </source>
</evidence>
<evidence type="ECO:0000305" key="16">
    <source>
    </source>
</evidence>
<evidence type="ECO:0000305" key="17">
    <source>
    </source>
</evidence>
<evidence type="ECO:0007829" key="18">
    <source>
        <dbReference type="PDB" id="3QC5"/>
    </source>
</evidence>
<evidence type="ECO:0007829" key="19">
    <source>
        <dbReference type="PDB" id="3QC6"/>
    </source>
</evidence>
<evidence type="ECO:0007829" key="20">
    <source>
        <dbReference type="PDB" id="6EF7"/>
    </source>
</evidence>
<gene>
    <name type="primary">gspB</name>
</gene>
<proteinExistence type="evidence at protein level"/>
<accession>Q939N5</accession>
<reference key="1">
    <citation type="journal article" date="2002" name="Mol. Microbiol.">
        <title>An accessory sec locus of Streptococcus gordonii is required for export of the surface protein GspB and for normal levels of binding to human platelets.</title>
        <authorList>
            <person name="Bensing B.A."/>
            <person name="Sullam P.M."/>
        </authorList>
    </citation>
    <scope>NUCLEOTIDE SEQUENCE [GENOMIC DNA]</scope>
    <scope>SUBCELLULAR LOCATION</scope>
    <scope>DISRUPTION PHENOTYPE</scope>
    <source>
        <strain>M99</strain>
    </source>
</reference>
<reference key="2">
    <citation type="journal article" date="1993" name="J. Med. Microbiol.">
        <title>Identity of viridans streptococci isolated from cases of infective endocarditis.</title>
        <authorList>
            <person name="Douglas C.W."/>
            <person name="Heath J."/>
            <person name="Hampton K.K."/>
            <person name="Preston F.E."/>
        </authorList>
    </citation>
    <scope>S.GORDONII IN INFECTIVE ENDOCARDITIS</scope>
</reference>
<reference key="3">
    <citation type="journal article" date="2004" name="J. Bacteriol.">
        <title>The Streptococcus gordonii platelet binding protein GspB undergoes glycosylation independently of export.</title>
        <authorList>
            <person name="Bensing B.A."/>
            <person name="Gibson B.W."/>
            <person name="Sullam P.M."/>
        </authorList>
    </citation>
    <scope>GLYCOSYLATION</scope>
    <scope>SUBCELLULAR LOCATION</scope>
    <source>
        <strain>M99</strain>
    </source>
</reference>
<reference key="4">
    <citation type="journal article" date="2004" name="Mol. Microbiol.">
        <title>Genes in the accessory sec locus of Streptococcus gordonii have three functionally distinct effects on the expression of the platelet-binding protein GspB.</title>
        <authorList>
            <person name="Takamatsu D."/>
            <person name="Bensing B.A."/>
            <person name="Sullam P.M."/>
        </authorList>
    </citation>
    <scope>EXPORT VIA THE ACCESSORY SECA2/SECY2 SYSTEM</scope>
    <source>
        <strain>M99</strain>
    </source>
</reference>
<reference key="5">
    <citation type="journal article" date="2004" name="J. Bacteriol.">
        <title>Four proteins encoded in the gspB-secY2A2 operon of Streptococcus gordonii mediate the intracellular glycosylation of the platelet-binding protein GspB.</title>
        <authorList>
            <person name="Takamatsu D."/>
            <person name="Bensing B.A."/>
            <person name="Sullam P.M."/>
        </authorList>
    </citation>
    <scope>GLYCOSYLATION OF SER-RICH REGIONS</scope>
    <source>
        <strain>M99</strain>
    </source>
</reference>
<reference key="6">
    <citation type="journal article" date="2009" name="Microbiology">
        <title>Glycosylation and biogenesis of a family of serine-rich bacterial adhesins.</title>
        <authorList>
            <person name="Zhou M."/>
            <person name="Wu H."/>
        </authorList>
    </citation>
    <scope>DISCUSSION OF SEQUENCE</scope>
</reference>
<reference key="7">
    <citation type="journal article" date="2010" name="PLoS Pathog.">
        <title>The pneumococcal serine-rich repeat protein is an intra-species bacterial adhesin that promotes bacterial aggregation in vivo and in biofilms.</title>
        <authorList>
            <person name="Sanchez C.J."/>
            <person name="Shivshankar P."/>
            <person name="Stol K."/>
            <person name="Trakhtenbroit S."/>
            <person name="Sullam P.M."/>
            <person name="Sauer K."/>
            <person name="Hermans P.W."/>
            <person name="Orihuela C.J."/>
        </authorList>
    </citation>
    <scope>FUNCTION</scope>
    <scope>DOMAIN</scope>
    <scope>DISRUPTION PHENOTYPE</scope>
    <source>
        <strain>M99</strain>
    </source>
</reference>
<reference key="8">
    <citation type="journal article" date="2011" name="J. Bacteriol.">
        <title>Asp2 and Asp3 interact directly with GspB, the export substrate of the Streptococcus gordonii accessory Sec System.</title>
        <authorList>
            <person name="Yen Y.T."/>
            <person name="Seepersaud R."/>
            <person name="Bensing B.A."/>
            <person name="Sullam P.M."/>
        </authorList>
    </citation>
    <scope>INTERACTION WITH ASP2 AND ASP3</scope>
</reference>
<reference key="9">
    <citation type="journal article" date="2016" name="Proc. Natl. Acad. Sci. U.S.A.">
        <title>Mechanism of a cytosolic O-glycosyltransferase essential for the synthesis of a bacterial adhesion protein.</title>
        <authorList>
            <person name="Chen Y."/>
            <person name="Seepersaud R."/>
            <person name="Bensing B.A."/>
            <person name="Sullam P.M."/>
            <person name="Rapoport T.A."/>
        </authorList>
    </citation>
    <scope>GLYCOSYLATION OF SER-RICH REGIONS</scope>
    <source>
        <strain>M99</strain>
    </source>
</reference>
<reference key="10">
    <citation type="journal article" date="2011" name="PLoS Pathog.">
        <title>A structural model for binding of the serine-rich repeat adhesin GspB to host carbohydrate receptors.</title>
        <authorList>
            <person name="Pyburn T.M."/>
            <person name="Bensing B.A."/>
            <person name="Xiong Y.Q."/>
            <person name="Melancon B.J."/>
            <person name="Tomasiak T.M."/>
            <person name="Ward N.J."/>
            <person name="Yankovskaya V."/>
            <person name="Oliver K.M."/>
            <person name="Cecchini G."/>
            <person name="Sulikowski G.A."/>
            <person name="Tyska M.J."/>
            <person name="Sullam P.M."/>
            <person name="Iverson T.M."/>
        </authorList>
    </citation>
    <scope>X-RAY CRYSTALLOGRAPHY (1.4 ANGSTROMS) OF 245-604</scope>
    <scope>FUNCTION</scope>
    <scope>MUTAGENESIS OF TYR-443; ARG-484 AND TYR-485</scope>
    <scope>INTERACTION WITH HUMAN GP1BA</scope>
</reference>
<keyword id="KW-0002">3D-structure</keyword>
<keyword id="KW-0130">Cell adhesion</keyword>
<keyword id="KW-0134">Cell wall</keyword>
<keyword id="KW-0325">Glycoprotein</keyword>
<keyword id="KW-0572">Peptidoglycan-anchor</keyword>
<keyword id="KW-0964">Secreted</keyword>
<keyword id="KW-0732">Signal</keyword>
<keyword id="KW-0843">Virulence</keyword>
<organism>
    <name type="scientific">Streptococcus gordonii</name>
    <dbReference type="NCBI Taxonomy" id="1302"/>
    <lineage>
        <taxon>Bacteria</taxon>
        <taxon>Bacillati</taxon>
        <taxon>Bacillota</taxon>
        <taxon>Bacilli</taxon>
        <taxon>Lactobacillales</taxon>
        <taxon>Streptococcaceae</taxon>
        <taxon>Streptococcus</taxon>
    </lineage>
</organism>
<name>GSPB_STRGN</name>
<feature type="signal peptide" evidence="3">
    <location>
        <begin position="1"/>
        <end position="85"/>
    </location>
</feature>
<feature type="chain" id="PRO_0000414192" description="Platelet binding protein GspB">
    <location>
        <begin position="86"/>
        <end position="3041"/>
    </location>
</feature>
<feature type="propeptide" id="PRO_0000414193" description="Removed by sortase" evidence="4">
    <location>
        <begin position="3042"/>
        <end position="3072"/>
    </location>
</feature>
<feature type="region of interest" description="Disordered" evidence="5">
    <location>
        <begin position="117"/>
        <end position="147"/>
    </location>
</feature>
<feature type="region of interest" description="Ser-rich region 1 (SSR1)">
    <location>
        <begin position="123"/>
        <end position="236"/>
    </location>
</feature>
<feature type="region of interest" description="Disordered" evidence="5">
    <location>
        <begin position="182"/>
        <end position="254"/>
    </location>
</feature>
<feature type="region of interest" description="Basic region (BR)">
    <location>
        <begin position="237"/>
        <end position="603"/>
    </location>
</feature>
<feature type="region of interest" description="Ser-rich region 2 (SSR2)">
    <location>
        <begin position="604"/>
        <end position="3028"/>
    </location>
</feature>
<feature type="region of interest" description="Disordered" evidence="5">
    <location>
        <begin position="876"/>
        <end position="909"/>
    </location>
</feature>
<feature type="region of interest" description="Disordered" evidence="5">
    <location>
        <begin position="936"/>
        <end position="969"/>
    </location>
</feature>
<feature type="region of interest" description="Disordered" evidence="5">
    <location>
        <begin position="1024"/>
        <end position="2085"/>
    </location>
</feature>
<feature type="region of interest" description="Disordered" evidence="5">
    <location>
        <begin position="2106"/>
        <end position="2139"/>
    </location>
</feature>
<feature type="region of interest" description="Disordered" evidence="5">
    <location>
        <begin position="2173"/>
        <end position="2223"/>
    </location>
</feature>
<feature type="region of interest" description="Disordered" evidence="5">
    <location>
        <begin position="2250"/>
        <end position="2595"/>
    </location>
</feature>
<feature type="region of interest" description="Disordered" evidence="5">
    <location>
        <begin position="2625"/>
        <end position="2965"/>
    </location>
</feature>
<feature type="region of interest" description="Disordered" evidence="5">
    <location>
        <begin position="3014"/>
        <end position="3045"/>
    </location>
</feature>
<feature type="short sequence motif" description="LPXTG sorting signal" evidence="4">
    <location>
        <begin position="3038"/>
        <end position="3042"/>
    </location>
</feature>
<feature type="compositionally biased region" description="Polar residues" evidence="5">
    <location>
        <begin position="118"/>
        <end position="127"/>
    </location>
</feature>
<feature type="compositionally biased region" description="Low complexity" evidence="5">
    <location>
        <begin position="131"/>
        <end position="147"/>
    </location>
</feature>
<feature type="compositionally biased region" description="Low complexity" evidence="5">
    <location>
        <begin position="182"/>
        <end position="238"/>
    </location>
</feature>
<feature type="compositionally biased region" description="Low complexity" evidence="5">
    <location>
        <begin position="3014"/>
        <end position="3028"/>
    </location>
</feature>
<feature type="site" description="Important for interaction with host glycoprotein and virulence">
    <location>
        <position position="443"/>
    </location>
</feature>
<feature type="site" description="Important for interaction with host glycoprotein and virulence">
    <location>
        <position position="484"/>
    </location>
</feature>
<feature type="site" description="Important for interaction with host glycoprotein and virulence">
    <location>
        <position position="485"/>
    </location>
</feature>
<feature type="modified residue" description="Pentaglycyl murein peptidoglycan amidated threonine" evidence="4">
    <location>
        <position position="3041"/>
    </location>
</feature>
<feature type="mutagenesis site" description="Strongly reduced interaction with GP1BA carbohydrate chains." evidence="11">
    <original>Y</original>
    <variation>F</variation>
    <location>
        <position position="443"/>
    </location>
</feature>
<feature type="mutagenesis site" description="Strongly reduced interaction with GP1BA carbohydrate chains. Strongly reduced platelet binding." evidence="11">
    <original>R</original>
    <variation>E</variation>
    <location>
        <position position="484"/>
    </location>
</feature>
<feature type="mutagenesis site" description="Strongly reduced interaction with GP1BA carbohydrate chains." evidence="11">
    <original>Y</original>
    <variation>F</variation>
    <location>
        <position position="485"/>
    </location>
</feature>
<feature type="strand" evidence="18">
    <location>
        <begin position="247"/>
        <end position="250"/>
    </location>
</feature>
<feature type="strand" evidence="18">
    <location>
        <begin position="253"/>
        <end position="257"/>
    </location>
</feature>
<feature type="strand" evidence="18">
    <location>
        <begin position="263"/>
        <end position="272"/>
    </location>
</feature>
<feature type="turn" evidence="18">
    <location>
        <begin position="273"/>
        <end position="275"/>
    </location>
</feature>
<feature type="strand" evidence="18">
    <location>
        <begin position="277"/>
        <end position="284"/>
    </location>
</feature>
<feature type="strand" evidence="18">
    <location>
        <begin position="291"/>
        <end position="299"/>
    </location>
</feature>
<feature type="strand" evidence="18">
    <location>
        <begin position="303"/>
        <end position="310"/>
    </location>
</feature>
<feature type="strand" evidence="19">
    <location>
        <begin position="316"/>
        <end position="319"/>
    </location>
</feature>
<feature type="strand" evidence="18">
    <location>
        <begin position="328"/>
        <end position="333"/>
    </location>
</feature>
<feature type="strand" evidence="18">
    <location>
        <begin position="338"/>
        <end position="346"/>
    </location>
</feature>
<feature type="strand" evidence="18">
    <location>
        <begin position="351"/>
        <end position="364"/>
    </location>
</feature>
<feature type="turn" evidence="19">
    <location>
        <begin position="368"/>
        <end position="370"/>
    </location>
</feature>
<feature type="helix" evidence="18">
    <location>
        <begin position="375"/>
        <end position="377"/>
    </location>
</feature>
<feature type="turn" evidence="18">
    <location>
        <begin position="379"/>
        <end position="382"/>
    </location>
</feature>
<feature type="strand" evidence="18">
    <location>
        <begin position="386"/>
        <end position="395"/>
    </location>
</feature>
<feature type="strand" evidence="20">
    <location>
        <begin position="404"/>
        <end position="406"/>
    </location>
</feature>
<feature type="strand" evidence="20">
    <location>
        <begin position="409"/>
        <end position="414"/>
    </location>
</feature>
<feature type="strand" evidence="20">
    <location>
        <begin position="418"/>
        <end position="426"/>
    </location>
</feature>
<feature type="helix" evidence="20">
    <location>
        <begin position="434"/>
        <end position="436"/>
    </location>
</feature>
<feature type="strand" evidence="20">
    <location>
        <begin position="438"/>
        <end position="440"/>
    </location>
</feature>
<feature type="strand" evidence="20">
    <location>
        <begin position="442"/>
        <end position="446"/>
    </location>
</feature>
<feature type="strand" evidence="20">
    <location>
        <begin position="455"/>
        <end position="461"/>
    </location>
</feature>
<feature type="strand" evidence="20">
    <location>
        <begin position="464"/>
        <end position="472"/>
    </location>
</feature>
<feature type="strand" evidence="18">
    <location>
        <begin position="475"/>
        <end position="477"/>
    </location>
</feature>
<feature type="strand" evidence="20">
    <location>
        <begin position="480"/>
        <end position="487"/>
    </location>
</feature>
<feature type="strand" evidence="20">
    <location>
        <begin position="495"/>
        <end position="497"/>
    </location>
</feature>
<feature type="helix" evidence="20">
    <location>
        <begin position="499"/>
        <end position="508"/>
    </location>
</feature>
<feature type="strand" evidence="20">
    <location>
        <begin position="515"/>
        <end position="521"/>
    </location>
</feature>
<feature type="strand" evidence="18">
    <location>
        <begin position="531"/>
        <end position="534"/>
    </location>
</feature>
<feature type="helix" evidence="18">
    <location>
        <begin position="541"/>
        <end position="554"/>
    </location>
</feature>
<feature type="helix" evidence="18">
    <location>
        <begin position="560"/>
        <end position="562"/>
    </location>
</feature>
<feature type="helix" evidence="18">
    <location>
        <begin position="564"/>
        <end position="566"/>
    </location>
</feature>
<feature type="helix" evidence="18">
    <location>
        <begin position="568"/>
        <end position="571"/>
    </location>
</feature>
<feature type="strand" evidence="18">
    <location>
        <begin position="572"/>
        <end position="574"/>
    </location>
</feature>
<feature type="strand" evidence="18">
    <location>
        <begin position="580"/>
        <end position="584"/>
    </location>
</feature>
<feature type="strand" evidence="18">
    <location>
        <begin position="589"/>
        <end position="592"/>
    </location>
</feature>
<feature type="turn" evidence="18">
    <location>
        <begin position="595"/>
        <end position="597"/>
    </location>
</feature>
<feature type="strand" evidence="18">
    <location>
        <begin position="598"/>
        <end position="601"/>
    </location>
</feature>
<sequence length="3072" mass="285769">MFFKRQKGQYHEVERVTRFKLIKSGKHWLRAATSQFGLLRLMKGSDVSSTEVKVVEEQSVEKSGLNYLKGIIATGAVLGGAVVTSSSVYAEEEQAHEKVIDTRDVLATRGEAVLSEEAATTLSSTEANPVESLSDTLSASESTSASSSVSTSISVSESFSVSGSLSYSTSLSQSVSASASASESLSVSSSASDSVSASTSTSASASQSVSASQKSTISTSESTRSESSQQSTEASSQTGRRRTRRAVTESAPNVEYHDVKGDMIQSVTTSFDDTSRLLTWTINLTPRQVKSNLGALVSISGNQETRTVTINGKNAANGGVYNSGGAWNLYTGESVNNNVLRITTQVNDTGGEVKLGLRLVTSDKKITKTNLPLEFSQVAATTNGSWDKAGYNTTIVEKDTERPVVNVPSEITVYRGESFEYFATVTDNSNAFDLAKTVVRWLYNNQPGRGTEWLQYSVTQVGNQLKVRIFGNVPIDTTIGDYTRYVVATDAAGNVNATQTEMGNAAVDKTSVNGQFKLIIRFRIKTPENTVFVNNPNQLTEVEKNLVREAVKKSNPDLRAQDVLNSNYVTGITVSNNGTTTITYRDGRKDIIDGSKFIDTRAGSISKSQSTSNSISVSLSKSESASASLVTSKLNSISSSASVSASTSISTSGSVSASESASTSSSVSASESASTSASVSASESASTSASVSASTSASTSASVSASTSASTSASTSASKSASTSASVSASTSASTSASVSASESASTSASVSASTSASTSASVSASTSASTSASVSASESASTSASVSASTSASTSASVSASESASTSASVSASTSASTSASVSASASASTSASVSASTSASTSASVSASASASTSASVSASTSASTSASVSASESASTSASVSASESASTSASVSASESASTSASVSASESASTSASVSASTSASTSASVSASESASTSASVSASESASTSASVSASESASTSASVSASESASTSASVSASTSASTSASVSASTSASTSASVSASTSASTSASVSASTSASTSASVSASESASTSASVSASESASTSASVSASTSASTSASVSASESASTSASVSASESASTSASESASESASTSASVSASESASTSASVSASESSSTSASVSASESSSTSASVSASESASTSASVSASESASTSASESASESASTSASVSASESASTSASVSASESASTSASVSASESVSTSASVSASESASTSASVSASESASTSASESASESASTSASVSASESASTSASVSASESASTSASVSASTSASTSASVSASESASTSASVSASESASTSASVSASESASTSASVSASESVSTSASVSASESASTSASVSASESASTSASESASESASTSASVSASESASTSASVSASESASTSASVSASTSASTSASVSASESASTSASVSASESASTSASVSASESASTSASVSASTSASTSASVSASESASTSTSVSTSTSASTSASVSASESASTSASVSASESASTSASVSASTSASTSASVSASESASTSASVSASESASTSASVSASESASTSASVSASESASTSASVSASTSASTSASVSASESASTSASVSASESASTSASVSASESASTSASVSASESASTSASVSASESASTSASVSASESASTSASVSASESASTSASVSASESASTSASVSASESASTSASVSASESASTSASVSASESASTSASVSASESASTSASVSASESASTSASVSASESASTSASVSASESASTSASVSASESASTSASVSASESASTSASVSASESASTSASVSASESASTSASVSASESASTSASVSASESASTSASVSASESASTSASVSASESASTSASVSASESASTSASVSASESASTSASVSASTSTSTSASVSASESASTSASVSASESASTSASVSASESASTSASVSASESASTSASVSASESASTSASVSASESASTSASVSASESASTSASVSASESASTSASVSASESASTSASVSASTSASTSASVSASESASTSASVSASESASTSASVSASESASTSASVSASESASTSASVSASESASTSASVSASESASTSASVSASESASTSASVSASESASTSASVSASKSASTSESASTSASVSASESASTSASVSASESASTSASVSASESVSTSASVSASDSASISASVLASESASTSASVSASESASTSASVSASESASTSASVSASESASTSSSVSASESASTSASVSASESASTSASVSASTSASTSASVSASESASTSASVSASESASTSASVSASESASTSASVSASESASTSASVSASESASTSASVSASESASTSASVSASESASTSASVSASTSASTSASVSASESASTSASVSSSESASTSASVSASESASTSASVSASESASTSASVSASESASTSASVSASESASTSASVSASTSASTSASVSASESASTSASVSASESASTSASVSASESASTSASVSASESASTSASVSASTSASTSASVSASESASTSASVSASESASTSASVSASTSASTSASVSASESASTSASVSASESASTSASVSASESASTSASVSASESASTSASVSASESASTSASVSASESASTSASVSASESASTSASVSASMSASTSASVSVSESTSTSASVSANESASTSASVSASESASTSASVSASESASTSASVSASESASTSASVSASESASTSASVSASESASTSASVSASESASTSASVSASESASTSASVSASESASTSASVSASESASTSASVSASTSASTSASVSANESASTSASVSASESASTSASVSASESASTSASVSASESASTSASVSASESASTSASVSASTSASTSASVSANESASTSASVSASESASTSASVSASESASTSASVSASESASTSASVSASESASTSASVSASTSASTSASVSASESASTSASASASESASTSASVSASESASTSASVSASESASTSASVSASESASTNASVSVSESMSVSESLSLSISTSVLHSQLNDIYESELYSLSLSESLSASQSLSQSLSESQSSSASQSMHDRISKGQLPRTGESENKASILALGLGALGLAFKKRKKNESED</sequence>
<dbReference type="EMBL" id="AY028381">
    <property type="protein sequence ID" value="AAL13053.1"/>
    <property type="molecule type" value="Genomic_DNA"/>
</dbReference>
<dbReference type="PDB" id="3QC5">
    <property type="method" value="X-ray"/>
    <property type="resolution" value="1.40 A"/>
    <property type="chains" value="X=245-604"/>
</dbReference>
<dbReference type="PDB" id="3QC6">
    <property type="method" value="X-ray"/>
    <property type="resolution" value="1.90 A"/>
    <property type="chains" value="X=245-604"/>
</dbReference>
<dbReference type="PDB" id="5IUC">
    <property type="method" value="X-ray"/>
    <property type="resolution" value="1.25 A"/>
    <property type="chains" value="A/B=399-521"/>
</dbReference>
<dbReference type="PDB" id="6EF7">
    <property type="method" value="X-ray"/>
    <property type="resolution" value="1.03 A"/>
    <property type="chains" value="A=399-521"/>
</dbReference>
<dbReference type="PDB" id="6EF9">
    <property type="method" value="X-ray"/>
    <property type="resolution" value="1.30 A"/>
    <property type="chains" value="A=398-521"/>
</dbReference>
<dbReference type="PDB" id="6EFA">
    <property type="method" value="X-ray"/>
    <property type="resolution" value="1.60 A"/>
    <property type="chains" value="A=399-601"/>
</dbReference>
<dbReference type="PDBsum" id="3QC5"/>
<dbReference type="PDBsum" id="3QC6"/>
<dbReference type="PDBsum" id="5IUC"/>
<dbReference type="PDBsum" id="6EF7"/>
<dbReference type="PDBsum" id="6EF9"/>
<dbReference type="PDBsum" id="6EFA"/>
<dbReference type="SMR" id="Q939N5"/>
<dbReference type="IntAct" id="Q939N5">
    <property type="interactions" value="2"/>
</dbReference>
<dbReference type="UniLectin" id="Q939N5"/>
<dbReference type="EvolutionaryTrace" id="Q939N5"/>
<dbReference type="GO" id="GO:0005576">
    <property type="term" value="C:extracellular region"/>
    <property type="evidence" value="ECO:0007669"/>
    <property type="project" value="UniProtKB-KW"/>
</dbReference>
<dbReference type="GO" id="GO:0007155">
    <property type="term" value="P:cell adhesion"/>
    <property type="evidence" value="ECO:0007669"/>
    <property type="project" value="UniProtKB-KW"/>
</dbReference>
<dbReference type="Gene3D" id="2.60.40.3260">
    <property type="match status" value="1"/>
</dbReference>
<dbReference type="Gene3D" id="2.60.40.4140">
    <property type="match status" value="1"/>
</dbReference>
<dbReference type="Gene3D" id="3.10.20.890">
    <property type="match status" value="1"/>
</dbReference>
<dbReference type="InterPro" id="IPR044024">
    <property type="entry name" value="aRib"/>
</dbReference>
<dbReference type="InterPro" id="IPR050252">
    <property type="entry name" value="Beta/Gamma-Crystallin"/>
</dbReference>
<dbReference type="InterPro" id="IPR022263">
    <property type="entry name" value="KxYKxGKxW"/>
</dbReference>
<dbReference type="InterPro" id="IPR019931">
    <property type="entry name" value="LPXTG_anchor"/>
</dbReference>
<dbReference type="InterPro" id="IPR026465">
    <property type="entry name" value="Ser_adhes_glycop_N"/>
</dbReference>
<dbReference type="NCBIfam" id="TIGR03715">
    <property type="entry name" value="KxYKxGKxW"/>
    <property type="match status" value="1"/>
</dbReference>
<dbReference type="NCBIfam" id="TIGR01167">
    <property type="entry name" value="LPXTG_anchor"/>
    <property type="match status" value="1"/>
</dbReference>
<dbReference type="NCBIfam" id="TIGR04224">
    <property type="entry name" value="ser_adhes_Nterm"/>
    <property type="match status" value="1"/>
</dbReference>
<dbReference type="PANTHER" id="PTHR11818">
    <property type="entry name" value="BETA/GAMMA CRYSTALLIN"/>
    <property type="match status" value="1"/>
</dbReference>
<dbReference type="PANTHER" id="PTHR11818:SF42">
    <property type="entry name" value="VOLTAGE-GATED HYDROGEN CHANNEL 1"/>
    <property type="match status" value="1"/>
</dbReference>
<dbReference type="Pfam" id="PF18938">
    <property type="entry name" value="aRib"/>
    <property type="match status" value="1"/>
</dbReference>
<dbReference type="Pfam" id="PF00746">
    <property type="entry name" value="Gram_pos_anchor"/>
    <property type="match status" value="1"/>
</dbReference>
<dbReference type="Pfam" id="PF19258">
    <property type="entry name" value="KxYKxGKxW_sig"/>
    <property type="match status" value="1"/>
</dbReference>
<dbReference type="PROSITE" id="PS50847">
    <property type="entry name" value="GRAM_POS_ANCHORING"/>
    <property type="match status" value="1"/>
</dbReference>